<feature type="chain" id="PRO_0000080768" description="Phosphatidylinositol 3-kinase regulatory subunit gamma">
    <location>
        <begin position="1"/>
        <end position="461"/>
    </location>
</feature>
<feature type="domain" description="SH2 1" evidence="2">
    <location>
        <begin position="65"/>
        <end position="160"/>
    </location>
</feature>
<feature type="domain" description="SH2 2" evidence="2">
    <location>
        <begin position="358"/>
        <end position="452"/>
    </location>
</feature>
<feature type="modified residue" description="Phosphotyrosine" evidence="3">
    <location>
        <position position="341"/>
    </location>
</feature>
<reference key="1">
    <citation type="journal article" date="1995" name="Mol. Cell. Biol.">
        <title>The structure and function of p55PIK reveal a new regulatory subunit for phosphatidylinositol 3-kinase.</title>
        <authorList>
            <person name="Pons S."/>
            <person name="Asano T."/>
            <person name="Glasheen E."/>
            <person name="Miralpeix M."/>
            <person name="Zhang Y."/>
            <person name="Fisher T.L."/>
            <person name="Myers M.G. Jr."/>
            <person name="Sun X.J."/>
            <person name="White M.F."/>
        </authorList>
    </citation>
    <scope>NUCLEOTIDE SEQUENCE [MRNA]</scope>
    <scope>PARTIAL PROTEIN SEQUENCE</scope>
    <scope>PHOSPHORYLATION AT TYR-341</scope>
    <source>
        <tissue>Embryo</tissue>
    </source>
</reference>
<reference key="2">
    <citation type="journal article" date="2004" name="Genome Res.">
        <title>The status, quality, and expansion of the NIH full-length cDNA project: the Mammalian Gene Collection (MGC).</title>
        <authorList>
            <consortium name="The MGC Project Team"/>
        </authorList>
    </citation>
    <scope>NUCLEOTIDE SEQUENCE [LARGE SCALE MRNA]</scope>
    <source>
        <strain>C57BL/6J</strain>
        <tissue>Brain</tissue>
    </source>
</reference>
<keyword id="KW-0903">Direct protein sequencing</keyword>
<keyword id="KW-0597">Phosphoprotein</keyword>
<keyword id="KW-1185">Reference proteome</keyword>
<keyword id="KW-0677">Repeat</keyword>
<keyword id="KW-0727">SH2 domain</keyword>
<evidence type="ECO:0000250" key="1"/>
<evidence type="ECO:0000255" key="2">
    <source>
        <dbReference type="PROSITE-ProRule" id="PRU00191"/>
    </source>
</evidence>
<evidence type="ECO:0000269" key="3">
    <source>
    </source>
</evidence>
<evidence type="ECO:0000305" key="4"/>
<gene>
    <name type="primary">Pik3r3</name>
</gene>
<organism>
    <name type="scientific">Mus musculus</name>
    <name type="common">Mouse</name>
    <dbReference type="NCBI Taxonomy" id="10090"/>
    <lineage>
        <taxon>Eukaryota</taxon>
        <taxon>Metazoa</taxon>
        <taxon>Chordata</taxon>
        <taxon>Craniata</taxon>
        <taxon>Vertebrata</taxon>
        <taxon>Euteleostomi</taxon>
        <taxon>Mammalia</taxon>
        <taxon>Eutheria</taxon>
        <taxon>Euarchontoglires</taxon>
        <taxon>Glires</taxon>
        <taxon>Rodentia</taxon>
        <taxon>Myomorpha</taxon>
        <taxon>Muroidea</taxon>
        <taxon>Muridae</taxon>
        <taxon>Murinae</taxon>
        <taxon>Mus</taxon>
        <taxon>Mus</taxon>
    </lineage>
</organism>
<sequence length="461" mass="54474">MYNTVWSMDRDDADWREVMMPYSTELIFYIEMDPPALPPKPPKPMTPAVTNGMKDSFISLQDAEWYWGDISREEVNDKLRDMPDGTFLVRDASTKMQGDYTLTLRKGGNNKLIKIYHRDGKYGFSEPLTFTSVVELINHYHHESLAQYNPKLDVKLTYPVSRFQQDQLVKEDNIDAVGKNLQEFHSQYQEKSKEYDRLYEEYTRTSQEIQMKRTAIEAFNETIKIFEEQCHTQEQHSKDYIERFRREGNEKEIERIMMNYDKLKSRLGEIHDSKLRLEQDLKKQALDNREIDKKMNSIKPDLIQLRKIRDQHLVWLNHRGVRQRRLNAWLGIKNEDSDESYFINEEDENLPHYDEKTWFVEDINRVQAEDLLYGKPDGAFLIRESSKKGCYACSVVADGEVKHCVIYSTARGYGFAEPYNLYSSLKELVLHYQQTSLVQHNDSLNVRLAYPVHAQMPTLCR</sequence>
<dbReference type="EMBL" id="S79169">
    <property type="protein sequence ID" value="AAB34938.1"/>
    <property type="molecule type" value="mRNA"/>
</dbReference>
<dbReference type="EMBL" id="BC053102">
    <property type="protein sequence ID" value="AAH53102.1"/>
    <property type="molecule type" value="mRNA"/>
</dbReference>
<dbReference type="CCDS" id="CCDS18509.1"/>
<dbReference type="RefSeq" id="NP_001342513.1">
    <property type="nucleotide sequence ID" value="NM_001355584.2"/>
</dbReference>
<dbReference type="RefSeq" id="NP_001342514.1">
    <property type="nucleotide sequence ID" value="NM_001355585.2"/>
</dbReference>
<dbReference type="RefSeq" id="NP_853616.1">
    <property type="nucleotide sequence ID" value="NM_181585.7"/>
</dbReference>
<dbReference type="RefSeq" id="XP_017175528.1">
    <property type="nucleotide sequence ID" value="XM_017320039.1"/>
</dbReference>
<dbReference type="RefSeq" id="XP_017175529.1">
    <property type="nucleotide sequence ID" value="XM_017320040.1"/>
</dbReference>
<dbReference type="SMR" id="Q64143"/>
<dbReference type="BioGRID" id="202164">
    <property type="interactions" value="1"/>
</dbReference>
<dbReference type="CORUM" id="Q64143"/>
<dbReference type="FunCoup" id="Q64143">
    <property type="interactions" value="1745"/>
</dbReference>
<dbReference type="IntAct" id="Q64143">
    <property type="interactions" value="3"/>
</dbReference>
<dbReference type="MINT" id="Q64143"/>
<dbReference type="STRING" id="10090.ENSMUSP00000030464"/>
<dbReference type="iPTMnet" id="Q64143"/>
<dbReference type="PhosphoSitePlus" id="Q64143"/>
<dbReference type="PaxDb" id="10090-ENSMUSP00000030464"/>
<dbReference type="ProteomicsDB" id="287755"/>
<dbReference type="DNASU" id="18710"/>
<dbReference type="Ensembl" id="ENSMUST00000030464.14">
    <property type="protein sequence ID" value="ENSMUSP00000030464.8"/>
    <property type="gene ID" value="ENSMUSG00000028698.14"/>
</dbReference>
<dbReference type="GeneID" id="18710"/>
<dbReference type="KEGG" id="mmu:18710"/>
<dbReference type="UCSC" id="uc008ugm.1">
    <property type="organism name" value="mouse"/>
</dbReference>
<dbReference type="AGR" id="MGI:109277"/>
<dbReference type="CTD" id="8503"/>
<dbReference type="MGI" id="MGI:109277">
    <property type="gene designation" value="Pik3r3"/>
</dbReference>
<dbReference type="VEuPathDB" id="HostDB:ENSMUSG00000028698"/>
<dbReference type="eggNOG" id="KOG4637">
    <property type="taxonomic scope" value="Eukaryota"/>
</dbReference>
<dbReference type="GeneTree" id="ENSGT00940000156259"/>
<dbReference type="InParanoid" id="Q64143"/>
<dbReference type="OMA" id="KICHING"/>
<dbReference type="OrthoDB" id="3175255at2759"/>
<dbReference type="PhylomeDB" id="Q64143"/>
<dbReference type="TreeFam" id="TF102033"/>
<dbReference type="Reactome" id="R-MMU-114604">
    <property type="pathway name" value="GPVI-mediated activation cascade"/>
</dbReference>
<dbReference type="Reactome" id="R-MMU-1257604">
    <property type="pathway name" value="PIP3 activates AKT signaling"/>
</dbReference>
<dbReference type="Reactome" id="R-MMU-1266695">
    <property type="pathway name" value="Interleukin-7 signaling"/>
</dbReference>
<dbReference type="Reactome" id="R-MMU-1433557">
    <property type="pathway name" value="Signaling by SCF-KIT"/>
</dbReference>
<dbReference type="Reactome" id="R-MMU-1660499">
    <property type="pathway name" value="Synthesis of PIPs at the plasma membrane"/>
</dbReference>
<dbReference type="Reactome" id="R-MMU-389357">
    <property type="pathway name" value="CD28 dependent PI3K/Akt signaling"/>
</dbReference>
<dbReference type="Reactome" id="R-MMU-416476">
    <property type="pathway name" value="G alpha (q) signalling events"/>
</dbReference>
<dbReference type="Reactome" id="R-MMU-512988">
    <property type="pathway name" value="Interleukin-3, Interleukin-5 and GM-CSF signaling"/>
</dbReference>
<dbReference type="Reactome" id="R-MMU-6811558">
    <property type="pathway name" value="PI5P, PP2A and IER3 Regulate PI3K/AKT Signaling"/>
</dbReference>
<dbReference type="Reactome" id="R-MMU-8853659">
    <property type="pathway name" value="RET signaling"/>
</dbReference>
<dbReference type="Reactome" id="R-MMU-9009391">
    <property type="pathway name" value="Extra-nuclear estrogen signaling"/>
</dbReference>
<dbReference type="Reactome" id="R-MMU-9013149">
    <property type="pathway name" value="RAC1 GTPase cycle"/>
</dbReference>
<dbReference type="Reactome" id="R-MMU-9013404">
    <property type="pathway name" value="RAC2 GTPase cycle"/>
</dbReference>
<dbReference type="Reactome" id="R-MMU-912526">
    <property type="pathway name" value="Interleukin receptor SHC signaling"/>
</dbReference>
<dbReference type="Reactome" id="R-MMU-912631">
    <property type="pathway name" value="Regulation of signaling by CBL"/>
</dbReference>
<dbReference type="Reactome" id="R-MMU-9927354">
    <property type="pathway name" value="Co-stimulation by ICOS"/>
</dbReference>
<dbReference type="BioGRID-ORCS" id="18710">
    <property type="hits" value="2 hits in 77 CRISPR screens"/>
</dbReference>
<dbReference type="ChiTaRS" id="Pik3r3">
    <property type="organism name" value="mouse"/>
</dbReference>
<dbReference type="PRO" id="PR:Q64143"/>
<dbReference type="Proteomes" id="UP000000589">
    <property type="component" value="Chromosome 4"/>
</dbReference>
<dbReference type="RNAct" id="Q64143">
    <property type="molecule type" value="protein"/>
</dbReference>
<dbReference type="Bgee" id="ENSMUSG00000028698">
    <property type="expression patterns" value="Expressed in cerebellar vermis and 222 other cell types or tissues"/>
</dbReference>
<dbReference type="ExpressionAtlas" id="Q64143">
    <property type="expression patterns" value="baseline and differential"/>
</dbReference>
<dbReference type="GO" id="GO:0005942">
    <property type="term" value="C:phosphatidylinositol 3-kinase complex"/>
    <property type="evidence" value="ECO:0000353"/>
    <property type="project" value="MGI"/>
</dbReference>
<dbReference type="GO" id="GO:0046935">
    <property type="term" value="F:1-phosphatidylinositol-3-kinase regulator activity"/>
    <property type="evidence" value="ECO:0000314"/>
    <property type="project" value="MGI"/>
</dbReference>
<dbReference type="GO" id="GO:0001784">
    <property type="term" value="F:phosphotyrosine residue binding"/>
    <property type="evidence" value="ECO:0007669"/>
    <property type="project" value="Ensembl"/>
</dbReference>
<dbReference type="GO" id="GO:0002042">
    <property type="term" value="P:cell migration involved in sprouting angiogenesis"/>
    <property type="evidence" value="ECO:0007669"/>
    <property type="project" value="Ensembl"/>
</dbReference>
<dbReference type="GO" id="GO:0008286">
    <property type="term" value="P:insulin receptor signaling pathway"/>
    <property type="evidence" value="ECO:0000314"/>
    <property type="project" value="MGI"/>
</dbReference>
<dbReference type="GO" id="GO:0043491">
    <property type="term" value="P:phosphatidylinositol 3-kinase/protein kinase B signal transduction"/>
    <property type="evidence" value="ECO:0007669"/>
    <property type="project" value="Ensembl"/>
</dbReference>
<dbReference type="GO" id="GO:0010628">
    <property type="term" value="P:positive regulation of gene expression"/>
    <property type="evidence" value="ECO:0007669"/>
    <property type="project" value="Ensembl"/>
</dbReference>
<dbReference type="CDD" id="cd09930">
    <property type="entry name" value="SH2_cSH2_p85_like"/>
    <property type="match status" value="1"/>
</dbReference>
<dbReference type="CDD" id="cd09942">
    <property type="entry name" value="SH2_nSH2_p85_like"/>
    <property type="match status" value="1"/>
</dbReference>
<dbReference type="FunFam" id="3.30.505.10:FF:000006">
    <property type="entry name" value="Phosphatidylinositol 3-kinase regulatory subunit alpha"/>
    <property type="match status" value="1"/>
</dbReference>
<dbReference type="FunFam" id="3.30.505.10:FF:000017">
    <property type="entry name" value="Phosphatidylinositol 3-kinase regulatory subunit gamma b"/>
    <property type="match status" value="1"/>
</dbReference>
<dbReference type="FunFam" id="1.10.287.1490:FF:000001">
    <property type="entry name" value="Putative phosphatidylinositol 3-kinase regulatory subunit alpha"/>
    <property type="match status" value="1"/>
</dbReference>
<dbReference type="Gene3D" id="1.10.287.1490">
    <property type="match status" value="1"/>
</dbReference>
<dbReference type="Gene3D" id="3.30.505.10">
    <property type="entry name" value="SH2 domain"/>
    <property type="match status" value="2"/>
</dbReference>
<dbReference type="InterPro" id="IPR032498">
    <property type="entry name" value="PI3K_P85_iSH2"/>
</dbReference>
<dbReference type="InterPro" id="IPR035020">
    <property type="entry name" value="PI3kinase_P85_cSH2"/>
</dbReference>
<dbReference type="InterPro" id="IPR035022">
    <property type="entry name" value="PI3kinase_P85_nSH2"/>
</dbReference>
<dbReference type="InterPro" id="IPR000980">
    <property type="entry name" value="SH2"/>
</dbReference>
<dbReference type="InterPro" id="IPR036860">
    <property type="entry name" value="SH2_dom_sf"/>
</dbReference>
<dbReference type="PANTHER" id="PTHR10155">
    <property type="entry name" value="PHOSPHATIDYLINOSITOL 3-KINASE REGULATORY SUBUNIT"/>
    <property type="match status" value="1"/>
</dbReference>
<dbReference type="PANTHER" id="PTHR10155:SF1">
    <property type="entry name" value="PHOSPHATIDYLINOSITOL 3-KINASE REGULATORY SUBUNIT BETA"/>
    <property type="match status" value="1"/>
</dbReference>
<dbReference type="Pfam" id="PF16454">
    <property type="entry name" value="PI3K_P85_iSH2"/>
    <property type="match status" value="1"/>
</dbReference>
<dbReference type="Pfam" id="PF00017">
    <property type="entry name" value="SH2"/>
    <property type="match status" value="2"/>
</dbReference>
<dbReference type="PRINTS" id="PR00678">
    <property type="entry name" value="PI3KINASEP85"/>
</dbReference>
<dbReference type="PRINTS" id="PR00401">
    <property type="entry name" value="SH2DOMAIN"/>
</dbReference>
<dbReference type="SMART" id="SM00252">
    <property type="entry name" value="SH2"/>
    <property type="match status" value="2"/>
</dbReference>
<dbReference type="SUPFAM" id="SSF55550">
    <property type="entry name" value="SH2 domain"/>
    <property type="match status" value="2"/>
</dbReference>
<dbReference type="PROSITE" id="PS50001">
    <property type="entry name" value="SH2"/>
    <property type="match status" value="2"/>
</dbReference>
<accession>Q64143</accession>
<protein>
    <recommendedName>
        <fullName>Phosphatidylinositol 3-kinase regulatory subunit gamma</fullName>
        <shortName>PI3-kinase regulatory subunit gamma</shortName>
        <shortName>PI3K regulatory subunit gamma</shortName>
        <shortName>PtdIns-3-kinase regulatory subunit gamma</shortName>
    </recommendedName>
    <alternativeName>
        <fullName>Phosphatidylinositol 3-kinase 55 kDa regulatory subunit gamma</fullName>
        <shortName>PI3-kinase subunit p55-gamma</shortName>
        <shortName>PtdIns-3-kinase regulatory subunit p55-gamma</shortName>
    </alternativeName>
    <alternativeName>
        <fullName>p55PIK</fullName>
    </alternativeName>
</protein>
<name>P55G_MOUSE</name>
<proteinExistence type="evidence at protein level"/>
<comment type="function">
    <text>Binds to activated (phosphorylated) protein-tyrosine kinases through its SH2 domain and regulates their kinase activity. During insulin stimulation, it also binds to IRS-1.</text>
</comment>
<comment type="subunit">
    <text evidence="1">Heterodimer of a regulatory subunit PIK3R3 and a p110 catalytic subunit (PIK3CA, PIK3CB or PIK3CD). Interacts with AXL (By similarity).</text>
</comment>
<comment type="tissue specificity">
    <text>Highest levels in brain and testis. Lower levels in adipose tissue, kidney, heart, lung and skeletal muscle. Barely detectable in liver and spleen.</text>
</comment>
<comment type="similarity">
    <text evidence="4">Belongs to the PI3K p85 subunit family.</text>
</comment>